<organism>
    <name type="scientific">Enterococcus faecalis (strain ATCC 700802 / V583)</name>
    <dbReference type="NCBI Taxonomy" id="226185"/>
    <lineage>
        <taxon>Bacteria</taxon>
        <taxon>Bacillati</taxon>
        <taxon>Bacillota</taxon>
        <taxon>Bacilli</taxon>
        <taxon>Lactobacillales</taxon>
        <taxon>Enterococcaceae</taxon>
        <taxon>Enterococcus</taxon>
    </lineage>
</organism>
<keyword id="KW-0004">4Fe-4S</keyword>
<keyword id="KW-0408">Iron</keyword>
<keyword id="KW-0411">Iron-sulfur</keyword>
<keyword id="KW-0479">Metal-binding</keyword>
<keyword id="KW-0489">Methyltransferase</keyword>
<keyword id="KW-1185">Reference proteome</keyword>
<keyword id="KW-0949">S-adenosyl-L-methionine</keyword>
<keyword id="KW-0808">Transferase</keyword>
<dbReference type="EC" id="2.1.1.-"/>
<dbReference type="EMBL" id="AE016830">
    <property type="protein sequence ID" value="AAO82410.1"/>
    <property type="molecule type" value="Genomic_DNA"/>
</dbReference>
<dbReference type="RefSeq" id="NP_816340.1">
    <property type="nucleotide sequence ID" value="NC_004668.1"/>
</dbReference>
<dbReference type="SMR" id="Q830R6"/>
<dbReference type="STRING" id="226185.EF_2706"/>
<dbReference type="EnsemblBacteria" id="AAO82410">
    <property type="protein sequence ID" value="AAO82410"/>
    <property type="gene ID" value="EF_2706"/>
</dbReference>
<dbReference type="KEGG" id="efa:EF2706"/>
<dbReference type="PATRIC" id="fig|226185.45.peg.857"/>
<dbReference type="eggNOG" id="COG2265">
    <property type="taxonomic scope" value="Bacteria"/>
</dbReference>
<dbReference type="HOGENOM" id="CLU_014689_7_1_9"/>
<dbReference type="Proteomes" id="UP000001415">
    <property type="component" value="Chromosome"/>
</dbReference>
<dbReference type="GO" id="GO:0051539">
    <property type="term" value="F:4 iron, 4 sulfur cluster binding"/>
    <property type="evidence" value="ECO:0007669"/>
    <property type="project" value="UniProtKB-KW"/>
</dbReference>
<dbReference type="GO" id="GO:0046872">
    <property type="term" value="F:metal ion binding"/>
    <property type="evidence" value="ECO:0007669"/>
    <property type="project" value="UniProtKB-KW"/>
</dbReference>
<dbReference type="GO" id="GO:0070041">
    <property type="term" value="F:rRNA (uridine-C5-)-methyltransferase activity"/>
    <property type="evidence" value="ECO:0007669"/>
    <property type="project" value="TreeGrafter"/>
</dbReference>
<dbReference type="GO" id="GO:0070475">
    <property type="term" value="P:rRNA base methylation"/>
    <property type="evidence" value="ECO:0007669"/>
    <property type="project" value="TreeGrafter"/>
</dbReference>
<dbReference type="CDD" id="cd02440">
    <property type="entry name" value="AdoMet_MTases"/>
    <property type="match status" value="1"/>
</dbReference>
<dbReference type="FunFam" id="3.40.50.150:FF:000009">
    <property type="entry name" value="23S rRNA (Uracil(1939)-C(5))-methyltransferase RlmD"/>
    <property type="match status" value="1"/>
</dbReference>
<dbReference type="FunFam" id="2.40.50.140:FF:000097">
    <property type="entry name" value="23S rRNA (uracil(1939)-C(5))-methyltransferase RlmD"/>
    <property type="match status" value="1"/>
</dbReference>
<dbReference type="FunFam" id="2.40.50.1070:FF:000003">
    <property type="entry name" value="23S rRNA (Uracil-5-)-methyltransferase RumA"/>
    <property type="match status" value="1"/>
</dbReference>
<dbReference type="Gene3D" id="2.40.50.1070">
    <property type="match status" value="1"/>
</dbReference>
<dbReference type="Gene3D" id="2.40.50.140">
    <property type="entry name" value="Nucleic acid-binding proteins"/>
    <property type="match status" value="1"/>
</dbReference>
<dbReference type="Gene3D" id="3.40.50.150">
    <property type="entry name" value="Vaccinia Virus protein VP39"/>
    <property type="match status" value="1"/>
</dbReference>
<dbReference type="InterPro" id="IPR030390">
    <property type="entry name" value="MeTrfase_TrmA_AS"/>
</dbReference>
<dbReference type="InterPro" id="IPR012340">
    <property type="entry name" value="NA-bd_OB-fold"/>
</dbReference>
<dbReference type="InterPro" id="IPR029063">
    <property type="entry name" value="SAM-dependent_MTases_sf"/>
</dbReference>
<dbReference type="InterPro" id="IPR002792">
    <property type="entry name" value="TRAM_dom"/>
</dbReference>
<dbReference type="InterPro" id="IPR010280">
    <property type="entry name" value="U5_MeTrfase_fam"/>
</dbReference>
<dbReference type="NCBIfam" id="TIGR00479">
    <property type="entry name" value="rumA"/>
    <property type="match status" value="1"/>
</dbReference>
<dbReference type="PANTHER" id="PTHR11061:SF45">
    <property type="match status" value="1"/>
</dbReference>
<dbReference type="PANTHER" id="PTHR11061">
    <property type="entry name" value="RNA M5U METHYLTRANSFERASE"/>
    <property type="match status" value="1"/>
</dbReference>
<dbReference type="Pfam" id="PF01938">
    <property type="entry name" value="TRAM"/>
    <property type="match status" value="1"/>
</dbReference>
<dbReference type="Pfam" id="PF05958">
    <property type="entry name" value="tRNA_U5-meth_tr"/>
    <property type="match status" value="1"/>
</dbReference>
<dbReference type="SUPFAM" id="SSF50249">
    <property type="entry name" value="Nucleic acid-binding proteins"/>
    <property type="match status" value="1"/>
</dbReference>
<dbReference type="SUPFAM" id="SSF53335">
    <property type="entry name" value="S-adenosyl-L-methionine-dependent methyltransferases"/>
    <property type="match status" value="1"/>
</dbReference>
<dbReference type="PROSITE" id="PS51687">
    <property type="entry name" value="SAM_MT_RNA_M5U"/>
    <property type="match status" value="1"/>
</dbReference>
<dbReference type="PROSITE" id="PS50926">
    <property type="entry name" value="TRAM"/>
    <property type="match status" value="1"/>
</dbReference>
<dbReference type="PROSITE" id="PS01230">
    <property type="entry name" value="TRMA_1"/>
    <property type="match status" value="1"/>
</dbReference>
<reference key="1">
    <citation type="journal article" date="2003" name="Science">
        <title>Role of mobile DNA in the evolution of vancomycin-resistant Enterococcus faecalis.</title>
        <authorList>
            <person name="Paulsen I.T."/>
            <person name="Banerjei L."/>
            <person name="Myers G.S.A."/>
            <person name="Nelson K.E."/>
            <person name="Seshadri R."/>
            <person name="Read T.D."/>
            <person name="Fouts D.E."/>
            <person name="Eisen J.A."/>
            <person name="Gill S.R."/>
            <person name="Heidelberg J.F."/>
            <person name="Tettelin H."/>
            <person name="Dodson R.J."/>
            <person name="Umayam L.A."/>
            <person name="Brinkac L.M."/>
            <person name="Beanan M.J."/>
            <person name="Daugherty S.C."/>
            <person name="DeBoy R.T."/>
            <person name="Durkin S.A."/>
            <person name="Kolonay J.F."/>
            <person name="Madupu R."/>
            <person name="Nelson W.C."/>
            <person name="Vamathevan J.J."/>
            <person name="Tran B."/>
            <person name="Upton J."/>
            <person name="Hansen T."/>
            <person name="Shetty J."/>
            <person name="Khouri H.M."/>
            <person name="Utterback T.R."/>
            <person name="Radune D."/>
            <person name="Ketchum K.A."/>
            <person name="Dougherty B.A."/>
            <person name="Fraser C.M."/>
        </authorList>
    </citation>
    <scope>NUCLEOTIDE SEQUENCE [LARGE SCALE GENOMIC DNA]</scope>
    <source>
        <strain>ATCC 700802 / V583</strain>
    </source>
</reference>
<evidence type="ECO:0000250" key="1"/>
<evidence type="ECO:0000255" key="2">
    <source>
        <dbReference type="PROSITE-ProRule" id="PRU00208"/>
    </source>
</evidence>
<evidence type="ECO:0000255" key="3">
    <source>
        <dbReference type="PROSITE-ProRule" id="PRU01024"/>
    </source>
</evidence>
<protein>
    <recommendedName>
        <fullName>Uncharacterized RNA methyltransferase EF_2706</fullName>
        <ecNumber>2.1.1.-</ecNumber>
    </recommendedName>
</protein>
<feature type="chain" id="PRO_0000161979" description="Uncharacterized RNA methyltransferase EF_2706">
    <location>
        <begin position="1"/>
        <end position="456"/>
    </location>
</feature>
<feature type="domain" description="TRAM" evidence="2">
    <location>
        <begin position="5"/>
        <end position="63"/>
    </location>
</feature>
<feature type="active site" description="Nucleophile" evidence="3">
    <location>
        <position position="414"/>
    </location>
</feature>
<feature type="binding site" evidence="1">
    <location>
        <position position="76"/>
    </location>
    <ligand>
        <name>[4Fe-4S] cluster</name>
        <dbReference type="ChEBI" id="CHEBI:49883"/>
    </ligand>
</feature>
<feature type="binding site" evidence="1">
    <location>
        <position position="82"/>
    </location>
    <ligand>
        <name>[4Fe-4S] cluster</name>
        <dbReference type="ChEBI" id="CHEBI:49883"/>
    </ligand>
</feature>
<feature type="binding site" evidence="1">
    <location>
        <position position="85"/>
    </location>
    <ligand>
        <name>[4Fe-4S] cluster</name>
        <dbReference type="ChEBI" id="CHEBI:49883"/>
    </ligand>
</feature>
<feature type="binding site" evidence="1">
    <location>
        <position position="165"/>
    </location>
    <ligand>
        <name>[4Fe-4S] cluster</name>
        <dbReference type="ChEBI" id="CHEBI:49883"/>
    </ligand>
</feature>
<feature type="binding site" evidence="3">
    <location>
        <position position="289"/>
    </location>
    <ligand>
        <name>S-adenosyl-L-methionine</name>
        <dbReference type="ChEBI" id="CHEBI:59789"/>
    </ligand>
</feature>
<feature type="binding site" evidence="3">
    <location>
        <position position="318"/>
    </location>
    <ligand>
        <name>S-adenosyl-L-methionine</name>
        <dbReference type="ChEBI" id="CHEBI:59789"/>
    </ligand>
</feature>
<feature type="binding site" evidence="3">
    <location>
        <position position="339"/>
    </location>
    <ligand>
        <name>S-adenosyl-L-methionine</name>
        <dbReference type="ChEBI" id="CHEBI:59789"/>
    </ligand>
</feature>
<feature type="binding site" evidence="3">
    <location>
        <position position="387"/>
    </location>
    <ligand>
        <name>S-adenosyl-L-methionine</name>
        <dbReference type="ChEBI" id="CHEBI:59789"/>
    </ligand>
</feature>
<comment type="similarity">
    <text evidence="3">Belongs to the class I-like SAM-binding methyltransferase superfamily. RNA M5U methyltransferase family.</text>
</comment>
<sequence>MTQQLVKKGQQISLKIKRLGINGEGIGYYKKLIIFVPGALPKEEVTATITNVTPKFAEGTLQSVKKAAKDRVVPPCPVYETCGGCQLQHLAYKAQLDFKKDLLKQALNKFKPANYQNYELRKTIGMDNPWNYRNKAQFQLRQIDGQVEAGLYQADSHQLVPIDNCLVQQPATTKVMNTLVDLLNDFQLPIYDERKNSGIFRTLMVRVGIQTGEVQVVFITQSQKFPQKEKMVRAINEQLPEVVSIMQNVQNKKTSLVMGDDTLHLWGKESIEEHINDVVFDLSPRAFFQLNPEQTEVLYNEGIKALDLQPNETVVDAYCGVGTIGLSLAKQAHQVRGMDTIPAAIDDARFNAKRLGVTNTHYAVGTAEDLLPKWFKEGFKPDAIVVDPPRTGLDRKLLTALLKQPPKKMVYISCNVSTLARDLVQLAKVYQVDYLQSVDMFPQTARCEVVVKLTRK</sequence>
<proteinExistence type="inferred from homology"/>
<gene>
    <name type="ordered locus">EF_2706</name>
</gene>
<accession>Q830R6</accession>
<name>Y2706_ENTFA</name>